<sequence>MGERKGQNKYYPPDYDPKKGGLNKFQGTHALRERARKIHLGIIIIRFEMPYNIWCDGCKNHIGMGVRYNAEKTKVGMYYTTPVFKFRMKCHLCDNHFEIQTDPGNLDYVILSGARRQENRWDPLQNEQVVPETKEVQKRLFDDAMYKLEHQAKDAKAGADARPVLQKLVERNMSVWDDSYMANSRLRAEFRQQKKEINGQQELDRQLLAKSSLDIALLPETTQDREMAALMKLQTKSALERESEQRLELLMRPALPGATVTTFGGLKRQKVLNTQLQVQDLGIRRKKLEETTSSATNEKPISLVGDYSSSDNDSNG</sequence>
<proteinExistence type="evidence at protein level"/>
<protein>
    <recommendedName>
        <fullName>Coiled-coil domain-containing protein 130 homolog</fullName>
    </recommendedName>
</protein>
<dbReference type="EMBL" id="AE013599">
    <property type="protein sequence ID" value="AAF57624.1"/>
    <property type="molecule type" value="Genomic_DNA"/>
</dbReference>
<dbReference type="EMBL" id="AY070525">
    <property type="protein sequence ID" value="AAL47996.1"/>
    <property type="molecule type" value="mRNA"/>
</dbReference>
<dbReference type="RefSeq" id="NP_611383.1">
    <property type="nucleotide sequence ID" value="NM_137539.4"/>
</dbReference>
<dbReference type="SMR" id="Q7K0F0"/>
<dbReference type="BioGRID" id="62846">
    <property type="interactions" value="14"/>
</dbReference>
<dbReference type="FunCoup" id="Q7K0F0">
    <property type="interactions" value="1277"/>
</dbReference>
<dbReference type="IntAct" id="Q7K0F0">
    <property type="interactions" value="13"/>
</dbReference>
<dbReference type="STRING" id="7227.FBpp0085801"/>
<dbReference type="PaxDb" id="7227-FBpp0085801"/>
<dbReference type="DNASU" id="37178"/>
<dbReference type="EnsemblMetazoa" id="FBtr0086619">
    <property type="protein sequence ID" value="FBpp0085801"/>
    <property type="gene ID" value="FBgn0034402"/>
</dbReference>
<dbReference type="GeneID" id="37178"/>
<dbReference type="KEGG" id="dme:Dmel_CG15084"/>
<dbReference type="UCSC" id="CG15084-RA">
    <property type="organism name" value="d. melanogaster"/>
</dbReference>
<dbReference type="AGR" id="FB:FBgn0034402"/>
<dbReference type="FlyBase" id="FBgn0034402">
    <property type="gene designation" value="CG15084"/>
</dbReference>
<dbReference type="VEuPathDB" id="VectorBase:FBgn0034402"/>
<dbReference type="eggNOG" id="KOG2990">
    <property type="taxonomic scope" value="Eukaryota"/>
</dbReference>
<dbReference type="GeneTree" id="ENSGT00530000063615"/>
<dbReference type="HOGENOM" id="CLU_050402_3_0_1"/>
<dbReference type="InParanoid" id="Q7K0F0"/>
<dbReference type="OMA" id="RNMSVWD"/>
<dbReference type="OrthoDB" id="360327at2759"/>
<dbReference type="PhylomeDB" id="Q7K0F0"/>
<dbReference type="BioGRID-ORCS" id="37178">
    <property type="hits" value="0 hits in 1 CRISPR screen"/>
</dbReference>
<dbReference type="GenomeRNAi" id="37178"/>
<dbReference type="PRO" id="PR:Q7K0F0"/>
<dbReference type="Proteomes" id="UP000000803">
    <property type="component" value="Chromosome 2R"/>
</dbReference>
<dbReference type="Bgee" id="FBgn0034402">
    <property type="expression patterns" value="Expressed in T neuron T4b (Drosophila) in embryonic/larval optic lobe (Drosophila) and 34 other cell types or tissues"/>
</dbReference>
<dbReference type="GO" id="GO:0071014">
    <property type="term" value="C:post-mRNA release spliceosomal complex"/>
    <property type="evidence" value="ECO:0000318"/>
    <property type="project" value="GO_Central"/>
</dbReference>
<dbReference type="GO" id="GO:0005684">
    <property type="term" value="C:U2-type spliceosomal complex"/>
    <property type="evidence" value="ECO:0000318"/>
    <property type="project" value="GO_Central"/>
</dbReference>
<dbReference type="GO" id="GO:0000398">
    <property type="term" value="P:mRNA splicing, via spliceosome"/>
    <property type="evidence" value="ECO:0007669"/>
    <property type="project" value="InterPro"/>
</dbReference>
<dbReference type="GO" id="GO:0008380">
    <property type="term" value="P:RNA splicing"/>
    <property type="evidence" value="ECO:0000318"/>
    <property type="project" value="GO_Central"/>
</dbReference>
<dbReference type="InterPro" id="IPR007590">
    <property type="entry name" value="Saf4/Yju2"/>
</dbReference>
<dbReference type="PANTHER" id="PTHR12111">
    <property type="entry name" value="SPLICING FACTOR YJU2"/>
    <property type="match status" value="1"/>
</dbReference>
<dbReference type="PANTHER" id="PTHR12111:SF2">
    <property type="entry name" value="SPLICING FACTOR YJU2B-RELATED"/>
    <property type="match status" value="1"/>
</dbReference>
<dbReference type="Pfam" id="PF04502">
    <property type="entry name" value="Saf4_Yju2"/>
    <property type="match status" value="1"/>
</dbReference>
<organism>
    <name type="scientific">Drosophila melanogaster</name>
    <name type="common">Fruit fly</name>
    <dbReference type="NCBI Taxonomy" id="7227"/>
    <lineage>
        <taxon>Eukaryota</taxon>
        <taxon>Metazoa</taxon>
        <taxon>Ecdysozoa</taxon>
        <taxon>Arthropoda</taxon>
        <taxon>Hexapoda</taxon>
        <taxon>Insecta</taxon>
        <taxon>Pterygota</taxon>
        <taxon>Neoptera</taxon>
        <taxon>Endopterygota</taxon>
        <taxon>Diptera</taxon>
        <taxon>Brachycera</taxon>
        <taxon>Muscomorpha</taxon>
        <taxon>Ephydroidea</taxon>
        <taxon>Drosophilidae</taxon>
        <taxon>Drosophila</taxon>
        <taxon>Sophophora</taxon>
    </lineage>
</organism>
<feature type="chain" id="PRO_0000328381" description="Coiled-coil domain-containing protein 130 homolog">
    <location>
        <begin position="1"/>
        <end position="316"/>
    </location>
</feature>
<feature type="region of interest" description="Disordered" evidence="2">
    <location>
        <begin position="287"/>
        <end position="316"/>
    </location>
</feature>
<feature type="coiled-coil region" evidence="1">
    <location>
        <begin position="182"/>
        <end position="203"/>
    </location>
</feature>
<reference key="1">
    <citation type="journal article" date="2000" name="Science">
        <title>The genome sequence of Drosophila melanogaster.</title>
        <authorList>
            <person name="Adams M.D."/>
            <person name="Celniker S.E."/>
            <person name="Holt R.A."/>
            <person name="Evans C.A."/>
            <person name="Gocayne J.D."/>
            <person name="Amanatides P.G."/>
            <person name="Scherer S.E."/>
            <person name="Li P.W."/>
            <person name="Hoskins R.A."/>
            <person name="Galle R.F."/>
            <person name="George R.A."/>
            <person name="Lewis S.E."/>
            <person name="Richards S."/>
            <person name="Ashburner M."/>
            <person name="Henderson S.N."/>
            <person name="Sutton G.G."/>
            <person name="Wortman J.R."/>
            <person name="Yandell M.D."/>
            <person name="Zhang Q."/>
            <person name="Chen L.X."/>
            <person name="Brandon R.C."/>
            <person name="Rogers Y.-H.C."/>
            <person name="Blazej R.G."/>
            <person name="Champe M."/>
            <person name="Pfeiffer B.D."/>
            <person name="Wan K.H."/>
            <person name="Doyle C."/>
            <person name="Baxter E.G."/>
            <person name="Helt G."/>
            <person name="Nelson C.R."/>
            <person name="Miklos G.L.G."/>
            <person name="Abril J.F."/>
            <person name="Agbayani A."/>
            <person name="An H.-J."/>
            <person name="Andrews-Pfannkoch C."/>
            <person name="Baldwin D."/>
            <person name="Ballew R.M."/>
            <person name="Basu A."/>
            <person name="Baxendale J."/>
            <person name="Bayraktaroglu L."/>
            <person name="Beasley E.M."/>
            <person name="Beeson K.Y."/>
            <person name="Benos P.V."/>
            <person name="Berman B.P."/>
            <person name="Bhandari D."/>
            <person name="Bolshakov S."/>
            <person name="Borkova D."/>
            <person name="Botchan M.R."/>
            <person name="Bouck J."/>
            <person name="Brokstein P."/>
            <person name="Brottier P."/>
            <person name="Burtis K.C."/>
            <person name="Busam D.A."/>
            <person name="Butler H."/>
            <person name="Cadieu E."/>
            <person name="Center A."/>
            <person name="Chandra I."/>
            <person name="Cherry J.M."/>
            <person name="Cawley S."/>
            <person name="Dahlke C."/>
            <person name="Davenport L.B."/>
            <person name="Davies P."/>
            <person name="de Pablos B."/>
            <person name="Delcher A."/>
            <person name="Deng Z."/>
            <person name="Mays A.D."/>
            <person name="Dew I."/>
            <person name="Dietz S.M."/>
            <person name="Dodson K."/>
            <person name="Doup L.E."/>
            <person name="Downes M."/>
            <person name="Dugan-Rocha S."/>
            <person name="Dunkov B.C."/>
            <person name="Dunn P."/>
            <person name="Durbin K.J."/>
            <person name="Evangelista C.C."/>
            <person name="Ferraz C."/>
            <person name="Ferriera S."/>
            <person name="Fleischmann W."/>
            <person name="Fosler C."/>
            <person name="Gabrielian A.E."/>
            <person name="Garg N.S."/>
            <person name="Gelbart W.M."/>
            <person name="Glasser K."/>
            <person name="Glodek A."/>
            <person name="Gong F."/>
            <person name="Gorrell J.H."/>
            <person name="Gu Z."/>
            <person name="Guan P."/>
            <person name="Harris M."/>
            <person name="Harris N.L."/>
            <person name="Harvey D.A."/>
            <person name="Heiman T.J."/>
            <person name="Hernandez J.R."/>
            <person name="Houck J."/>
            <person name="Hostin D."/>
            <person name="Houston K.A."/>
            <person name="Howland T.J."/>
            <person name="Wei M.-H."/>
            <person name="Ibegwam C."/>
            <person name="Jalali M."/>
            <person name="Kalush F."/>
            <person name="Karpen G.H."/>
            <person name="Ke Z."/>
            <person name="Kennison J.A."/>
            <person name="Ketchum K.A."/>
            <person name="Kimmel B.E."/>
            <person name="Kodira C.D."/>
            <person name="Kraft C.L."/>
            <person name="Kravitz S."/>
            <person name="Kulp D."/>
            <person name="Lai Z."/>
            <person name="Lasko P."/>
            <person name="Lei Y."/>
            <person name="Levitsky A.A."/>
            <person name="Li J.H."/>
            <person name="Li Z."/>
            <person name="Liang Y."/>
            <person name="Lin X."/>
            <person name="Liu X."/>
            <person name="Mattei B."/>
            <person name="McIntosh T.C."/>
            <person name="McLeod M.P."/>
            <person name="McPherson D."/>
            <person name="Merkulov G."/>
            <person name="Milshina N.V."/>
            <person name="Mobarry C."/>
            <person name="Morris J."/>
            <person name="Moshrefi A."/>
            <person name="Mount S.M."/>
            <person name="Moy M."/>
            <person name="Murphy B."/>
            <person name="Murphy L."/>
            <person name="Muzny D.M."/>
            <person name="Nelson D.L."/>
            <person name="Nelson D.R."/>
            <person name="Nelson K.A."/>
            <person name="Nixon K."/>
            <person name="Nusskern D.R."/>
            <person name="Pacleb J.M."/>
            <person name="Palazzolo M."/>
            <person name="Pittman G.S."/>
            <person name="Pan S."/>
            <person name="Pollard J."/>
            <person name="Puri V."/>
            <person name="Reese M.G."/>
            <person name="Reinert K."/>
            <person name="Remington K."/>
            <person name="Saunders R.D.C."/>
            <person name="Scheeler F."/>
            <person name="Shen H."/>
            <person name="Shue B.C."/>
            <person name="Siden-Kiamos I."/>
            <person name="Simpson M."/>
            <person name="Skupski M.P."/>
            <person name="Smith T.J."/>
            <person name="Spier E."/>
            <person name="Spradling A.C."/>
            <person name="Stapleton M."/>
            <person name="Strong R."/>
            <person name="Sun E."/>
            <person name="Svirskas R."/>
            <person name="Tector C."/>
            <person name="Turner R."/>
            <person name="Venter E."/>
            <person name="Wang A.H."/>
            <person name="Wang X."/>
            <person name="Wang Z.-Y."/>
            <person name="Wassarman D.A."/>
            <person name="Weinstock G.M."/>
            <person name="Weissenbach J."/>
            <person name="Williams S.M."/>
            <person name="Woodage T."/>
            <person name="Worley K.C."/>
            <person name="Wu D."/>
            <person name="Yang S."/>
            <person name="Yao Q.A."/>
            <person name="Ye J."/>
            <person name="Yeh R.-F."/>
            <person name="Zaveri J.S."/>
            <person name="Zhan M."/>
            <person name="Zhang G."/>
            <person name="Zhao Q."/>
            <person name="Zheng L."/>
            <person name="Zheng X.H."/>
            <person name="Zhong F.N."/>
            <person name="Zhong W."/>
            <person name="Zhou X."/>
            <person name="Zhu S.C."/>
            <person name="Zhu X."/>
            <person name="Smith H.O."/>
            <person name="Gibbs R.A."/>
            <person name="Myers E.W."/>
            <person name="Rubin G.M."/>
            <person name="Venter J.C."/>
        </authorList>
    </citation>
    <scope>NUCLEOTIDE SEQUENCE [LARGE SCALE GENOMIC DNA]</scope>
    <source>
        <strain>Berkeley</strain>
    </source>
</reference>
<reference key="2">
    <citation type="journal article" date="2002" name="Genome Biol.">
        <title>Annotation of the Drosophila melanogaster euchromatic genome: a systematic review.</title>
        <authorList>
            <person name="Misra S."/>
            <person name="Crosby M.A."/>
            <person name="Mungall C.J."/>
            <person name="Matthews B.B."/>
            <person name="Campbell K.S."/>
            <person name="Hradecky P."/>
            <person name="Huang Y."/>
            <person name="Kaminker J.S."/>
            <person name="Millburn G.H."/>
            <person name="Prochnik S.E."/>
            <person name="Smith C.D."/>
            <person name="Tupy J.L."/>
            <person name="Whitfield E.J."/>
            <person name="Bayraktaroglu L."/>
            <person name="Berman B.P."/>
            <person name="Bettencourt B.R."/>
            <person name="Celniker S.E."/>
            <person name="de Grey A.D.N.J."/>
            <person name="Drysdale R.A."/>
            <person name="Harris N.L."/>
            <person name="Richter J."/>
            <person name="Russo S."/>
            <person name="Schroeder A.J."/>
            <person name="Shu S.Q."/>
            <person name="Stapleton M."/>
            <person name="Yamada C."/>
            <person name="Ashburner M."/>
            <person name="Gelbart W.M."/>
            <person name="Rubin G.M."/>
            <person name="Lewis S.E."/>
        </authorList>
    </citation>
    <scope>GENOME REANNOTATION</scope>
    <source>
        <strain>Berkeley</strain>
    </source>
</reference>
<reference key="3">
    <citation type="journal article" date="2002" name="Genome Biol.">
        <title>A Drosophila full-length cDNA resource.</title>
        <authorList>
            <person name="Stapleton M."/>
            <person name="Carlson J.W."/>
            <person name="Brokstein P."/>
            <person name="Yu C."/>
            <person name="Champe M."/>
            <person name="George R.A."/>
            <person name="Guarin H."/>
            <person name="Kronmiller B."/>
            <person name="Pacleb J.M."/>
            <person name="Park S."/>
            <person name="Wan K.H."/>
            <person name="Rubin G.M."/>
            <person name="Celniker S.E."/>
        </authorList>
    </citation>
    <scope>NUCLEOTIDE SEQUENCE [LARGE SCALE MRNA]</scope>
    <source>
        <strain>Berkeley</strain>
        <tissue>Head</tissue>
    </source>
</reference>
<evidence type="ECO:0000255" key="1"/>
<evidence type="ECO:0000256" key="2">
    <source>
        <dbReference type="SAM" id="MobiDB-lite"/>
    </source>
</evidence>
<evidence type="ECO:0000305" key="3"/>
<comment type="interaction">
    <interactant intactId="EBI-26717295">
        <id>Q7K0F0</id>
    </interactant>
    <interactant intactId="EBI-124763">
        <id>Q9VW58</id>
        <label>Dmel\CG8004</label>
    </interactant>
    <organismsDiffer>false</organismsDiffer>
    <experiments>4</experiments>
</comment>
<comment type="similarity">
    <text evidence="3">Belongs to the CWC16 family.</text>
</comment>
<keyword id="KW-0175">Coiled coil</keyword>
<keyword id="KW-1185">Reference proteome</keyword>
<name>CC130_DROME</name>
<gene>
    <name type="ORF">CG15084</name>
</gene>
<accession>Q7K0F0</accession>